<reference key="1">
    <citation type="journal article" date="2008" name="J. Bacteriol.">
        <title>Complete genome sequence of uropathogenic Proteus mirabilis, a master of both adherence and motility.</title>
        <authorList>
            <person name="Pearson M.M."/>
            <person name="Sebaihia M."/>
            <person name="Churcher C."/>
            <person name="Quail M.A."/>
            <person name="Seshasayee A.S."/>
            <person name="Luscombe N.M."/>
            <person name="Abdellah Z."/>
            <person name="Arrosmith C."/>
            <person name="Atkin B."/>
            <person name="Chillingworth T."/>
            <person name="Hauser H."/>
            <person name="Jagels K."/>
            <person name="Moule S."/>
            <person name="Mungall K."/>
            <person name="Norbertczak H."/>
            <person name="Rabbinowitsch E."/>
            <person name="Walker D."/>
            <person name="Whithead S."/>
            <person name="Thomson N.R."/>
            <person name="Rather P.N."/>
            <person name="Parkhill J."/>
            <person name="Mobley H.L.T."/>
        </authorList>
    </citation>
    <scope>NUCLEOTIDE SEQUENCE [LARGE SCALE GENOMIC DNA]</scope>
    <source>
        <strain>HI4320</strain>
    </source>
</reference>
<sequence length="301" mass="34598">MQKFDTKTFQGLILTLQDYWARQGCTIVQPLDMEVGAGTSHPMTCLRALGPEPIAAAYVQPSRRPTDGRYGENPNRLQHYYQFQVIIKPSPDNIQELYLGSLRELGLDPTIHDIRFVEDNWENPTLGAWGLGWEVWLNGMEVTQFTYFQQVGGLECKPVTGEITYGLERLAMYIQGVDSVYDLVWCDGPLGKTTYGDIYHQNEVEQSTYNFEYADVDFLFSCFEQYEKEARELLELEKPLPLPAYERILKAGHTFNLLDARKAISVTERQRYILRIRTLTKAVAEAYYASREALGFPMCKK</sequence>
<dbReference type="EC" id="6.1.1.14" evidence="1"/>
<dbReference type="EMBL" id="AM942759">
    <property type="protein sequence ID" value="CAR45625.1"/>
    <property type="molecule type" value="Genomic_DNA"/>
</dbReference>
<dbReference type="RefSeq" id="WP_004246832.1">
    <property type="nucleotide sequence ID" value="NC_010554.1"/>
</dbReference>
<dbReference type="SMR" id="B4EZ94"/>
<dbReference type="EnsemblBacteria" id="CAR45625">
    <property type="protein sequence ID" value="CAR45625"/>
    <property type="gene ID" value="PMI2854"/>
</dbReference>
<dbReference type="GeneID" id="93392770"/>
<dbReference type="KEGG" id="pmr:PMI2854"/>
<dbReference type="eggNOG" id="COG0752">
    <property type="taxonomic scope" value="Bacteria"/>
</dbReference>
<dbReference type="HOGENOM" id="CLU_057066_1_0_6"/>
<dbReference type="Proteomes" id="UP000008319">
    <property type="component" value="Chromosome"/>
</dbReference>
<dbReference type="GO" id="GO:0005829">
    <property type="term" value="C:cytosol"/>
    <property type="evidence" value="ECO:0007669"/>
    <property type="project" value="TreeGrafter"/>
</dbReference>
<dbReference type="GO" id="GO:0005524">
    <property type="term" value="F:ATP binding"/>
    <property type="evidence" value="ECO:0007669"/>
    <property type="project" value="UniProtKB-UniRule"/>
</dbReference>
<dbReference type="GO" id="GO:0004820">
    <property type="term" value="F:glycine-tRNA ligase activity"/>
    <property type="evidence" value="ECO:0007669"/>
    <property type="project" value="UniProtKB-UniRule"/>
</dbReference>
<dbReference type="GO" id="GO:0006426">
    <property type="term" value="P:glycyl-tRNA aminoacylation"/>
    <property type="evidence" value="ECO:0007669"/>
    <property type="project" value="UniProtKB-UniRule"/>
</dbReference>
<dbReference type="CDD" id="cd00733">
    <property type="entry name" value="GlyRS_alpha_core"/>
    <property type="match status" value="1"/>
</dbReference>
<dbReference type="FunFam" id="1.20.58.180:FF:000001">
    <property type="entry name" value="Glycine--tRNA ligase alpha subunit"/>
    <property type="match status" value="1"/>
</dbReference>
<dbReference type="FunFam" id="3.30.930.10:FF:000006">
    <property type="entry name" value="Glycine--tRNA ligase alpha subunit"/>
    <property type="match status" value="1"/>
</dbReference>
<dbReference type="Gene3D" id="3.30.930.10">
    <property type="entry name" value="Bira Bifunctional Protein, Domain 2"/>
    <property type="match status" value="1"/>
</dbReference>
<dbReference type="Gene3D" id="1.20.58.180">
    <property type="entry name" value="Class II aaRS and biotin synthetases, domain 2"/>
    <property type="match status" value="1"/>
</dbReference>
<dbReference type="HAMAP" id="MF_00254">
    <property type="entry name" value="Gly_tRNA_synth_alpha"/>
    <property type="match status" value="1"/>
</dbReference>
<dbReference type="InterPro" id="IPR045864">
    <property type="entry name" value="aa-tRNA-synth_II/BPL/LPL"/>
</dbReference>
<dbReference type="InterPro" id="IPR006194">
    <property type="entry name" value="Gly-tRNA-synth_heterodimer"/>
</dbReference>
<dbReference type="InterPro" id="IPR002310">
    <property type="entry name" value="Gly-tRNA_ligase_asu"/>
</dbReference>
<dbReference type="NCBIfam" id="TIGR00388">
    <property type="entry name" value="glyQ"/>
    <property type="match status" value="1"/>
</dbReference>
<dbReference type="NCBIfam" id="NF006827">
    <property type="entry name" value="PRK09348.1"/>
    <property type="match status" value="1"/>
</dbReference>
<dbReference type="PANTHER" id="PTHR30075:SF2">
    <property type="entry name" value="GLYCINE--TRNA LIGASE, CHLOROPLASTIC_MITOCHONDRIAL 2"/>
    <property type="match status" value="1"/>
</dbReference>
<dbReference type="PANTHER" id="PTHR30075">
    <property type="entry name" value="GLYCYL-TRNA SYNTHETASE"/>
    <property type="match status" value="1"/>
</dbReference>
<dbReference type="Pfam" id="PF02091">
    <property type="entry name" value="tRNA-synt_2e"/>
    <property type="match status" value="1"/>
</dbReference>
<dbReference type="PRINTS" id="PR01044">
    <property type="entry name" value="TRNASYNTHGA"/>
</dbReference>
<dbReference type="SUPFAM" id="SSF55681">
    <property type="entry name" value="Class II aaRS and biotin synthetases"/>
    <property type="match status" value="1"/>
</dbReference>
<dbReference type="PROSITE" id="PS50861">
    <property type="entry name" value="AA_TRNA_LIGASE_II_GLYAB"/>
    <property type="match status" value="1"/>
</dbReference>
<gene>
    <name evidence="1" type="primary">glyQ</name>
    <name type="ordered locus">PMI2854</name>
</gene>
<protein>
    <recommendedName>
        <fullName evidence="1">Glycine--tRNA ligase alpha subunit</fullName>
        <ecNumber evidence="1">6.1.1.14</ecNumber>
    </recommendedName>
    <alternativeName>
        <fullName evidence="1">Glycyl-tRNA synthetase alpha subunit</fullName>
        <shortName evidence="1">GlyRS</shortName>
    </alternativeName>
</protein>
<feature type="chain" id="PRO_1000101216" description="Glycine--tRNA ligase alpha subunit">
    <location>
        <begin position="1"/>
        <end position="301"/>
    </location>
</feature>
<keyword id="KW-0030">Aminoacyl-tRNA synthetase</keyword>
<keyword id="KW-0067">ATP-binding</keyword>
<keyword id="KW-0963">Cytoplasm</keyword>
<keyword id="KW-0436">Ligase</keyword>
<keyword id="KW-0547">Nucleotide-binding</keyword>
<keyword id="KW-0648">Protein biosynthesis</keyword>
<keyword id="KW-1185">Reference proteome</keyword>
<accession>B4EZ94</accession>
<evidence type="ECO:0000255" key="1">
    <source>
        <dbReference type="HAMAP-Rule" id="MF_00254"/>
    </source>
</evidence>
<name>SYGA_PROMH</name>
<proteinExistence type="inferred from homology"/>
<organism>
    <name type="scientific">Proteus mirabilis (strain HI4320)</name>
    <dbReference type="NCBI Taxonomy" id="529507"/>
    <lineage>
        <taxon>Bacteria</taxon>
        <taxon>Pseudomonadati</taxon>
        <taxon>Pseudomonadota</taxon>
        <taxon>Gammaproteobacteria</taxon>
        <taxon>Enterobacterales</taxon>
        <taxon>Morganellaceae</taxon>
        <taxon>Proteus</taxon>
    </lineage>
</organism>
<comment type="catalytic activity">
    <reaction evidence="1">
        <text>tRNA(Gly) + glycine + ATP = glycyl-tRNA(Gly) + AMP + diphosphate</text>
        <dbReference type="Rhea" id="RHEA:16013"/>
        <dbReference type="Rhea" id="RHEA-COMP:9664"/>
        <dbReference type="Rhea" id="RHEA-COMP:9683"/>
        <dbReference type="ChEBI" id="CHEBI:30616"/>
        <dbReference type="ChEBI" id="CHEBI:33019"/>
        <dbReference type="ChEBI" id="CHEBI:57305"/>
        <dbReference type="ChEBI" id="CHEBI:78442"/>
        <dbReference type="ChEBI" id="CHEBI:78522"/>
        <dbReference type="ChEBI" id="CHEBI:456215"/>
        <dbReference type="EC" id="6.1.1.14"/>
    </reaction>
</comment>
<comment type="subunit">
    <text evidence="1">Tetramer of two alpha and two beta subunits.</text>
</comment>
<comment type="subcellular location">
    <subcellularLocation>
        <location evidence="1">Cytoplasm</location>
    </subcellularLocation>
</comment>
<comment type="similarity">
    <text evidence="1">Belongs to the class-II aminoacyl-tRNA synthetase family.</text>
</comment>